<dbReference type="EMBL" id="AF153896">
    <property type="protein sequence ID" value="AAK26684.1"/>
    <property type="molecule type" value="Genomic_DNA"/>
</dbReference>
<dbReference type="RefSeq" id="YP_007625951.1">
    <property type="nucleotide sequence ID" value="NC_020691.1"/>
</dbReference>
<dbReference type="SMR" id="Q9B5R0"/>
<dbReference type="GeneID" id="14843343"/>
<dbReference type="CTD" id="4519"/>
<dbReference type="GO" id="GO:0005743">
    <property type="term" value="C:mitochondrial inner membrane"/>
    <property type="evidence" value="ECO:0007669"/>
    <property type="project" value="UniProtKB-SubCell"/>
</dbReference>
<dbReference type="GO" id="GO:0045275">
    <property type="term" value="C:respiratory chain complex III"/>
    <property type="evidence" value="ECO:0007669"/>
    <property type="project" value="InterPro"/>
</dbReference>
<dbReference type="GO" id="GO:0046872">
    <property type="term" value="F:metal ion binding"/>
    <property type="evidence" value="ECO:0007669"/>
    <property type="project" value="UniProtKB-KW"/>
</dbReference>
<dbReference type="GO" id="GO:0008121">
    <property type="term" value="F:ubiquinol-cytochrome-c reductase activity"/>
    <property type="evidence" value="ECO:0007669"/>
    <property type="project" value="InterPro"/>
</dbReference>
<dbReference type="GO" id="GO:0006122">
    <property type="term" value="P:mitochondrial electron transport, ubiquinol to cytochrome c"/>
    <property type="evidence" value="ECO:0007669"/>
    <property type="project" value="TreeGrafter"/>
</dbReference>
<dbReference type="CDD" id="cd00290">
    <property type="entry name" value="cytochrome_b_C"/>
    <property type="match status" value="1"/>
</dbReference>
<dbReference type="CDD" id="cd00284">
    <property type="entry name" value="Cytochrome_b_N"/>
    <property type="match status" value="1"/>
</dbReference>
<dbReference type="FunFam" id="1.20.810.10:FF:000002">
    <property type="entry name" value="Cytochrome b"/>
    <property type="match status" value="1"/>
</dbReference>
<dbReference type="Gene3D" id="1.20.810.10">
    <property type="entry name" value="Cytochrome Bc1 Complex, Chain C"/>
    <property type="match status" value="1"/>
</dbReference>
<dbReference type="InterPro" id="IPR005798">
    <property type="entry name" value="Cyt_b/b6_C"/>
</dbReference>
<dbReference type="InterPro" id="IPR036150">
    <property type="entry name" value="Cyt_b/b6_C_sf"/>
</dbReference>
<dbReference type="InterPro" id="IPR005797">
    <property type="entry name" value="Cyt_b/b6_N"/>
</dbReference>
<dbReference type="InterPro" id="IPR027387">
    <property type="entry name" value="Cytb/b6-like_sf"/>
</dbReference>
<dbReference type="InterPro" id="IPR030689">
    <property type="entry name" value="Cytochrome_b"/>
</dbReference>
<dbReference type="InterPro" id="IPR048260">
    <property type="entry name" value="Cytochrome_b_C_euk/bac"/>
</dbReference>
<dbReference type="InterPro" id="IPR048259">
    <property type="entry name" value="Cytochrome_b_N_euk/bac"/>
</dbReference>
<dbReference type="InterPro" id="IPR016174">
    <property type="entry name" value="Di-haem_cyt_TM"/>
</dbReference>
<dbReference type="PANTHER" id="PTHR19271">
    <property type="entry name" value="CYTOCHROME B"/>
    <property type="match status" value="1"/>
</dbReference>
<dbReference type="PANTHER" id="PTHR19271:SF16">
    <property type="entry name" value="CYTOCHROME B"/>
    <property type="match status" value="1"/>
</dbReference>
<dbReference type="Pfam" id="PF00032">
    <property type="entry name" value="Cytochrom_B_C"/>
    <property type="match status" value="1"/>
</dbReference>
<dbReference type="Pfam" id="PF00033">
    <property type="entry name" value="Cytochrome_B"/>
    <property type="match status" value="1"/>
</dbReference>
<dbReference type="PIRSF" id="PIRSF038885">
    <property type="entry name" value="COB"/>
    <property type="match status" value="1"/>
</dbReference>
<dbReference type="SUPFAM" id="SSF81648">
    <property type="entry name" value="a domain/subunit of cytochrome bc1 complex (Ubiquinol-cytochrome c reductase)"/>
    <property type="match status" value="1"/>
</dbReference>
<dbReference type="SUPFAM" id="SSF81342">
    <property type="entry name" value="Transmembrane di-heme cytochromes"/>
    <property type="match status" value="1"/>
</dbReference>
<dbReference type="PROSITE" id="PS51003">
    <property type="entry name" value="CYTB_CTER"/>
    <property type="match status" value="1"/>
</dbReference>
<dbReference type="PROSITE" id="PS51002">
    <property type="entry name" value="CYTB_NTER"/>
    <property type="match status" value="1"/>
</dbReference>
<name>CYB_CEPNG</name>
<proteinExistence type="inferred from homology"/>
<reference key="1">
    <citation type="journal article" date="2001" name="Mol. Phylogenet. Evol.">
        <title>Retrieval of four adaptive lineages in duiker antelope: evidence from mitochondrial DNA sequences and fluorescence in situ hybridization.</title>
        <authorList>
            <person name="van Vuuren B.J."/>
            <person name="Robinson T.J."/>
        </authorList>
    </citation>
    <scope>NUCLEOTIDE SEQUENCE [GENOMIC DNA]</scope>
</reference>
<comment type="function">
    <text evidence="2">Component of the ubiquinol-cytochrome c reductase complex (complex III or cytochrome b-c1 complex) that is part of the mitochondrial respiratory chain. The b-c1 complex mediates electron transfer from ubiquinol to cytochrome c. Contributes to the generation of a proton gradient across the mitochondrial membrane that is then used for ATP synthesis.</text>
</comment>
<comment type="cofactor">
    <cofactor evidence="2">
        <name>heme b</name>
        <dbReference type="ChEBI" id="CHEBI:60344"/>
    </cofactor>
    <text evidence="2">Binds 2 heme b groups non-covalently.</text>
</comment>
<comment type="subunit">
    <text evidence="2">The cytochrome bc1 complex contains 11 subunits: 3 respiratory subunits (MT-CYB, CYC1 and UQCRFS1), 2 core proteins (UQCRC1 and UQCRC2) and 6 low-molecular weight proteins (UQCRH/QCR6, UQCRB/QCR7, UQCRQ/QCR8, UQCR10/QCR9, UQCR11/QCR10 and a cleavage product of UQCRFS1). This cytochrome bc1 complex then forms a dimer.</text>
</comment>
<comment type="subcellular location">
    <subcellularLocation>
        <location evidence="2">Mitochondrion inner membrane</location>
        <topology evidence="2">Multi-pass membrane protein</topology>
    </subcellularLocation>
</comment>
<comment type="miscellaneous">
    <text evidence="1">Heme 1 (or BL or b562) is low-potential and absorbs at about 562 nm, and heme 2 (or BH or b566) is high-potential and absorbs at about 566 nm.</text>
</comment>
<comment type="similarity">
    <text evidence="3 4">Belongs to the cytochrome b family.</text>
</comment>
<comment type="caution">
    <text evidence="2">The full-length protein contains only eight transmembrane helices, not nine as predicted by bioinformatics tools.</text>
</comment>
<organism>
    <name type="scientific">Cephalophorus nigrifrons</name>
    <name type="common">Black-fronted duiker</name>
    <name type="synonym">Cephalophus nigrifrons</name>
    <dbReference type="NCBI Taxonomy" id="129227"/>
    <lineage>
        <taxon>Eukaryota</taxon>
        <taxon>Metazoa</taxon>
        <taxon>Chordata</taxon>
        <taxon>Craniata</taxon>
        <taxon>Vertebrata</taxon>
        <taxon>Euteleostomi</taxon>
        <taxon>Mammalia</taxon>
        <taxon>Eutheria</taxon>
        <taxon>Laurasiatheria</taxon>
        <taxon>Artiodactyla</taxon>
        <taxon>Ruminantia</taxon>
        <taxon>Pecora</taxon>
        <taxon>Bovidae</taxon>
        <taxon>Cephalophinae</taxon>
        <taxon>Cephalophorus</taxon>
    </lineage>
</organism>
<feature type="chain" id="PRO_0000060754" description="Cytochrome b">
    <location>
        <begin position="1"/>
        <end position="379"/>
    </location>
</feature>
<feature type="transmembrane region" description="Helical" evidence="2">
    <location>
        <begin position="33"/>
        <end position="53"/>
    </location>
</feature>
<feature type="transmembrane region" description="Helical" evidence="2">
    <location>
        <begin position="77"/>
        <end position="98"/>
    </location>
</feature>
<feature type="transmembrane region" description="Helical" evidence="2">
    <location>
        <begin position="113"/>
        <end position="133"/>
    </location>
</feature>
<feature type="transmembrane region" description="Helical" evidence="2">
    <location>
        <begin position="178"/>
        <end position="198"/>
    </location>
</feature>
<feature type="transmembrane region" description="Helical" evidence="2">
    <location>
        <begin position="226"/>
        <end position="246"/>
    </location>
</feature>
<feature type="transmembrane region" description="Helical" evidence="2">
    <location>
        <begin position="288"/>
        <end position="308"/>
    </location>
</feature>
<feature type="transmembrane region" description="Helical" evidence="2">
    <location>
        <begin position="320"/>
        <end position="340"/>
    </location>
</feature>
<feature type="transmembrane region" description="Helical" evidence="2">
    <location>
        <begin position="347"/>
        <end position="367"/>
    </location>
</feature>
<feature type="binding site" description="axial binding residue" evidence="2">
    <location>
        <position position="83"/>
    </location>
    <ligand>
        <name>heme b</name>
        <dbReference type="ChEBI" id="CHEBI:60344"/>
        <label>b562</label>
    </ligand>
    <ligandPart>
        <name>Fe</name>
        <dbReference type="ChEBI" id="CHEBI:18248"/>
    </ligandPart>
</feature>
<feature type="binding site" description="axial binding residue" evidence="2">
    <location>
        <position position="97"/>
    </location>
    <ligand>
        <name>heme b</name>
        <dbReference type="ChEBI" id="CHEBI:60344"/>
        <label>b566</label>
    </ligand>
    <ligandPart>
        <name>Fe</name>
        <dbReference type="ChEBI" id="CHEBI:18248"/>
    </ligandPart>
</feature>
<feature type="binding site" description="axial binding residue" evidence="2">
    <location>
        <position position="182"/>
    </location>
    <ligand>
        <name>heme b</name>
        <dbReference type="ChEBI" id="CHEBI:60344"/>
        <label>b562</label>
    </ligand>
    <ligandPart>
        <name>Fe</name>
        <dbReference type="ChEBI" id="CHEBI:18248"/>
    </ligandPart>
</feature>
<feature type="binding site" description="axial binding residue" evidence="2">
    <location>
        <position position="196"/>
    </location>
    <ligand>
        <name>heme b</name>
        <dbReference type="ChEBI" id="CHEBI:60344"/>
        <label>b566</label>
    </ligand>
    <ligandPart>
        <name>Fe</name>
        <dbReference type="ChEBI" id="CHEBI:18248"/>
    </ligandPart>
</feature>
<feature type="binding site" evidence="2">
    <location>
        <position position="201"/>
    </location>
    <ligand>
        <name>a ubiquinone</name>
        <dbReference type="ChEBI" id="CHEBI:16389"/>
    </ligand>
</feature>
<accession>Q9B5R0</accession>
<geneLocation type="mitochondrion"/>
<sequence length="379" mass="42767">MTNIRKTHPLLKIVNNAFIDLPAPSNISSWWNFGSLLGICLILQILTGLFLAMHYTADTTTAFSSVTHICRDVNYGWIIRYMHANGASMFFICLFMHVGRGLYYGSYTYMETWNIGVILLFATMATAFMGYVLPWGQMSFWGATVITNLLSAIPYIGTNLVEWIWGGFSVDKATLTRFFAFHFIFPFIIAALAMVHLLFLHETGSNNPTGISSDTDKIPFHPYYTIKDILGALLLVLALMTLVLFSPDLLGDPDNYTPANPLNTPPHIKPEWYFLFAYAILRSIPNKLGGVLALVLSILILVLMPFLHTSKQRSMMFRPISQCLFWILVADLLTLTWIGGQPVEHPYIIIGQLASIMYFLLILVLMPMASTIENNLLKW</sequence>
<gene>
    <name type="primary">MT-CYB</name>
    <name type="synonym">COB</name>
    <name type="synonym">CYTB</name>
    <name type="synonym">MTCYB</name>
</gene>
<evidence type="ECO:0000250" key="1"/>
<evidence type="ECO:0000250" key="2">
    <source>
        <dbReference type="UniProtKB" id="P00157"/>
    </source>
</evidence>
<evidence type="ECO:0000255" key="3">
    <source>
        <dbReference type="PROSITE-ProRule" id="PRU00967"/>
    </source>
</evidence>
<evidence type="ECO:0000255" key="4">
    <source>
        <dbReference type="PROSITE-ProRule" id="PRU00968"/>
    </source>
</evidence>
<keyword id="KW-0249">Electron transport</keyword>
<keyword id="KW-0349">Heme</keyword>
<keyword id="KW-0408">Iron</keyword>
<keyword id="KW-0472">Membrane</keyword>
<keyword id="KW-0479">Metal-binding</keyword>
<keyword id="KW-0496">Mitochondrion</keyword>
<keyword id="KW-0999">Mitochondrion inner membrane</keyword>
<keyword id="KW-0679">Respiratory chain</keyword>
<keyword id="KW-0812">Transmembrane</keyword>
<keyword id="KW-1133">Transmembrane helix</keyword>
<keyword id="KW-0813">Transport</keyword>
<keyword id="KW-0830">Ubiquinone</keyword>
<protein>
    <recommendedName>
        <fullName>Cytochrome b</fullName>
    </recommendedName>
    <alternativeName>
        <fullName>Complex III subunit 3</fullName>
    </alternativeName>
    <alternativeName>
        <fullName>Complex III subunit III</fullName>
    </alternativeName>
    <alternativeName>
        <fullName>Cytochrome b-c1 complex subunit 3</fullName>
    </alternativeName>
    <alternativeName>
        <fullName>Ubiquinol-cytochrome-c reductase complex cytochrome b subunit</fullName>
    </alternativeName>
</protein>